<feature type="chain" id="PRO_0000229887" description="23S rRNA (uracil(1939)-C(5))-methyltransferase RlmD">
    <location>
        <begin position="1"/>
        <end position="438"/>
    </location>
</feature>
<feature type="domain" description="TRAM" evidence="1">
    <location>
        <begin position="10"/>
        <end position="69"/>
    </location>
</feature>
<feature type="active site" description="Nucleophile" evidence="1">
    <location>
        <position position="396"/>
    </location>
</feature>
<feature type="binding site" evidence="1">
    <location>
        <position position="82"/>
    </location>
    <ligand>
        <name>[4Fe-4S] cluster</name>
        <dbReference type="ChEBI" id="CHEBI:49883"/>
    </ligand>
</feature>
<feature type="binding site" evidence="1">
    <location>
        <position position="88"/>
    </location>
    <ligand>
        <name>[4Fe-4S] cluster</name>
        <dbReference type="ChEBI" id="CHEBI:49883"/>
    </ligand>
</feature>
<feature type="binding site" evidence="1">
    <location>
        <position position="91"/>
    </location>
    <ligand>
        <name>[4Fe-4S] cluster</name>
        <dbReference type="ChEBI" id="CHEBI:49883"/>
    </ligand>
</feature>
<feature type="binding site" evidence="1">
    <location>
        <position position="169"/>
    </location>
    <ligand>
        <name>[4Fe-4S] cluster</name>
        <dbReference type="ChEBI" id="CHEBI:49883"/>
    </ligand>
</feature>
<feature type="binding site" evidence="1">
    <location>
        <position position="272"/>
    </location>
    <ligand>
        <name>S-adenosyl-L-methionine</name>
        <dbReference type="ChEBI" id="CHEBI:59789"/>
    </ligand>
</feature>
<feature type="binding site" evidence="1">
    <location>
        <position position="301"/>
    </location>
    <ligand>
        <name>S-adenosyl-L-methionine</name>
        <dbReference type="ChEBI" id="CHEBI:59789"/>
    </ligand>
</feature>
<feature type="binding site" evidence="1">
    <location>
        <position position="306"/>
    </location>
    <ligand>
        <name>S-adenosyl-L-methionine</name>
        <dbReference type="ChEBI" id="CHEBI:59789"/>
    </ligand>
</feature>
<feature type="binding site" evidence="1">
    <location>
        <position position="322"/>
    </location>
    <ligand>
        <name>S-adenosyl-L-methionine</name>
        <dbReference type="ChEBI" id="CHEBI:59789"/>
    </ligand>
</feature>
<feature type="binding site" evidence="1">
    <location>
        <position position="349"/>
    </location>
    <ligand>
        <name>S-adenosyl-L-methionine</name>
        <dbReference type="ChEBI" id="CHEBI:59789"/>
    </ligand>
</feature>
<feature type="binding site" evidence="1">
    <location>
        <position position="370"/>
    </location>
    <ligand>
        <name>S-adenosyl-L-methionine</name>
        <dbReference type="ChEBI" id="CHEBI:59789"/>
    </ligand>
</feature>
<sequence>MAQFFKPKKKASVNTKHQSVDVVRLDHNGAGIAFVDKKPVFIEGALPGEKAIIQFIEQKKQFSRAKLIKLAQKSEKRQTPICQHYHECGGCNLQHLQHEEQIVAKNEKLQELMKKQGVSQGEMVQPIMGEELSYRRRARISLMLNKQTNQLDFGFRKKQSKAIVNVRHCPVLVQELDQHLESLFTLLNQLKGKKHLGHVELVQADNGSVLLIRHVADFNEKDQQALVNYCEERNLILYLMPEADVLNHVRGEEPFYLIDGTKIYFTPKDFIQVNRNVNEQMVEQALSWLDLNENDSVLDLFCGLGNFSLPLAKKVKTVVGIEGVDEMVQRAKLNAERNQLSNVSFYQANLEEEVSEQVWASTKFTKILLDPARAGAAGVMETVAKLKPQTVVYVSCNPATLARDSQLLIQHGFKLTRLGMLDMFPHTGHLESMALFER</sequence>
<gene>
    <name evidence="1" type="primary">rlmD</name>
    <name type="synonym">rumA</name>
    <name type="ordered locus">VF_2081</name>
</gene>
<accession>Q5E320</accession>
<evidence type="ECO:0000255" key="1">
    <source>
        <dbReference type="HAMAP-Rule" id="MF_01010"/>
    </source>
</evidence>
<evidence type="ECO:0000305" key="2"/>
<dbReference type="EC" id="2.1.1.190" evidence="1"/>
<dbReference type="EMBL" id="CP000020">
    <property type="protein sequence ID" value="AAW86576.1"/>
    <property type="status" value="ALT_INIT"/>
    <property type="molecule type" value="Genomic_DNA"/>
</dbReference>
<dbReference type="RefSeq" id="WP_047863511.1">
    <property type="nucleotide sequence ID" value="NC_006840.2"/>
</dbReference>
<dbReference type="RefSeq" id="YP_205464.1">
    <property type="nucleotide sequence ID" value="NC_006840.2"/>
</dbReference>
<dbReference type="SMR" id="Q5E320"/>
<dbReference type="STRING" id="312309.VF_2081"/>
<dbReference type="EnsemblBacteria" id="AAW86576">
    <property type="protein sequence ID" value="AAW86576"/>
    <property type="gene ID" value="VF_2081"/>
</dbReference>
<dbReference type="GeneID" id="54164786"/>
<dbReference type="KEGG" id="vfi:VF_2081"/>
<dbReference type="PATRIC" id="fig|312309.11.peg.2123"/>
<dbReference type="eggNOG" id="COG2265">
    <property type="taxonomic scope" value="Bacteria"/>
</dbReference>
<dbReference type="HOGENOM" id="CLU_014689_8_2_6"/>
<dbReference type="OrthoDB" id="9804590at2"/>
<dbReference type="Proteomes" id="UP000000537">
    <property type="component" value="Chromosome I"/>
</dbReference>
<dbReference type="GO" id="GO:0051539">
    <property type="term" value="F:4 iron, 4 sulfur cluster binding"/>
    <property type="evidence" value="ECO:0007669"/>
    <property type="project" value="UniProtKB-KW"/>
</dbReference>
<dbReference type="GO" id="GO:0005506">
    <property type="term" value="F:iron ion binding"/>
    <property type="evidence" value="ECO:0007669"/>
    <property type="project" value="UniProtKB-UniRule"/>
</dbReference>
<dbReference type="GO" id="GO:0003723">
    <property type="term" value="F:RNA binding"/>
    <property type="evidence" value="ECO:0007669"/>
    <property type="project" value="InterPro"/>
</dbReference>
<dbReference type="GO" id="GO:0070041">
    <property type="term" value="F:rRNA (uridine-C5-)-methyltransferase activity"/>
    <property type="evidence" value="ECO:0007669"/>
    <property type="project" value="UniProtKB-UniRule"/>
</dbReference>
<dbReference type="GO" id="GO:0070475">
    <property type="term" value="P:rRNA base methylation"/>
    <property type="evidence" value="ECO:0007669"/>
    <property type="project" value="TreeGrafter"/>
</dbReference>
<dbReference type="CDD" id="cd02440">
    <property type="entry name" value="AdoMet_MTases"/>
    <property type="match status" value="1"/>
</dbReference>
<dbReference type="FunFam" id="3.40.50.150:FF:000009">
    <property type="entry name" value="23S rRNA (Uracil(1939)-C(5))-methyltransferase RlmD"/>
    <property type="match status" value="1"/>
</dbReference>
<dbReference type="FunFam" id="2.40.50.140:FF:000097">
    <property type="entry name" value="23S rRNA (uracil(1939)-C(5))-methyltransferase RlmD"/>
    <property type="match status" value="1"/>
</dbReference>
<dbReference type="Gene3D" id="2.40.50.1070">
    <property type="match status" value="1"/>
</dbReference>
<dbReference type="Gene3D" id="2.40.50.140">
    <property type="entry name" value="Nucleic acid-binding proteins"/>
    <property type="match status" value="1"/>
</dbReference>
<dbReference type="Gene3D" id="3.40.50.150">
    <property type="entry name" value="Vaccinia Virus protein VP39"/>
    <property type="match status" value="1"/>
</dbReference>
<dbReference type="HAMAP" id="MF_01010">
    <property type="entry name" value="23SrRNA_methyltr_RlmD"/>
    <property type="match status" value="1"/>
</dbReference>
<dbReference type="InterPro" id="IPR001566">
    <property type="entry name" value="23S_rRNA_MeTrfase_RlmD"/>
</dbReference>
<dbReference type="InterPro" id="IPR030390">
    <property type="entry name" value="MeTrfase_TrmA_AS"/>
</dbReference>
<dbReference type="InterPro" id="IPR030391">
    <property type="entry name" value="MeTrfase_TrmA_CS"/>
</dbReference>
<dbReference type="InterPro" id="IPR012340">
    <property type="entry name" value="NA-bd_OB-fold"/>
</dbReference>
<dbReference type="InterPro" id="IPR029063">
    <property type="entry name" value="SAM-dependent_MTases_sf"/>
</dbReference>
<dbReference type="InterPro" id="IPR002792">
    <property type="entry name" value="TRAM_dom"/>
</dbReference>
<dbReference type="InterPro" id="IPR010280">
    <property type="entry name" value="U5_MeTrfase_fam"/>
</dbReference>
<dbReference type="NCBIfam" id="NF009639">
    <property type="entry name" value="PRK13168.1"/>
    <property type="match status" value="1"/>
</dbReference>
<dbReference type="NCBIfam" id="TIGR00479">
    <property type="entry name" value="rumA"/>
    <property type="match status" value="1"/>
</dbReference>
<dbReference type="PANTHER" id="PTHR11061:SF49">
    <property type="entry name" value="23S RRNA (URACIL(1939)-C(5))-METHYLTRANSFERASE RLMD"/>
    <property type="match status" value="1"/>
</dbReference>
<dbReference type="PANTHER" id="PTHR11061">
    <property type="entry name" value="RNA M5U METHYLTRANSFERASE"/>
    <property type="match status" value="1"/>
</dbReference>
<dbReference type="Pfam" id="PF01938">
    <property type="entry name" value="TRAM"/>
    <property type="match status" value="1"/>
</dbReference>
<dbReference type="Pfam" id="PF05958">
    <property type="entry name" value="tRNA_U5-meth_tr"/>
    <property type="match status" value="1"/>
</dbReference>
<dbReference type="SUPFAM" id="SSF50249">
    <property type="entry name" value="Nucleic acid-binding proteins"/>
    <property type="match status" value="1"/>
</dbReference>
<dbReference type="SUPFAM" id="SSF53335">
    <property type="entry name" value="S-adenosyl-L-methionine-dependent methyltransferases"/>
    <property type="match status" value="1"/>
</dbReference>
<dbReference type="PROSITE" id="PS51687">
    <property type="entry name" value="SAM_MT_RNA_M5U"/>
    <property type="match status" value="1"/>
</dbReference>
<dbReference type="PROSITE" id="PS50926">
    <property type="entry name" value="TRAM"/>
    <property type="match status" value="1"/>
</dbReference>
<dbReference type="PROSITE" id="PS01230">
    <property type="entry name" value="TRMA_1"/>
    <property type="match status" value="1"/>
</dbReference>
<dbReference type="PROSITE" id="PS01231">
    <property type="entry name" value="TRMA_2"/>
    <property type="match status" value="1"/>
</dbReference>
<protein>
    <recommendedName>
        <fullName evidence="1">23S rRNA (uracil(1939)-C(5))-methyltransferase RlmD</fullName>
        <ecNumber evidence="1">2.1.1.190</ecNumber>
    </recommendedName>
    <alternativeName>
        <fullName evidence="1">23S rRNA(m5U1939)-methyltransferase</fullName>
    </alternativeName>
</protein>
<proteinExistence type="inferred from homology"/>
<organism>
    <name type="scientific">Aliivibrio fischeri (strain ATCC 700601 / ES114)</name>
    <name type="common">Vibrio fischeri</name>
    <dbReference type="NCBI Taxonomy" id="312309"/>
    <lineage>
        <taxon>Bacteria</taxon>
        <taxon>Pseudomonadati</taxon>
        <taxon>Pseudomonadota</taxon>
        <taxon>Gammaproteobacteria</taxon>
        <taxon>Vibrionales</taxon>
        <taxon>Vibrionaceae</taxon>
        <taxon>Aliivibrio</taxon>
    </lineage>
</organism>
<comment type="function">
    <text evidence="1">Catalyzes the formation of 5-methyl-uridine at position 1939 (m5U1939) in 23S rRNA.</text>
</comment>
<comment type="catalytic activity">
    <reaction evidence="1">
        <text>uridine(1939) in 23S rRNA + S-adenosyl-L-methionine = 5-methyluridine(1939) in 23S rRNA + S-adenosyl-L-homocysteine + H(+)</text>
        <dbReference type="Rhea" id="RHEA:42908"/>
        <dbReference type="Rhea" id="RHEA-COMP:10278"/>
        <dbReference type="Rhea" id="RHEA-COMP:10279"/>
        <dbReference type="ChEBI" id="CHEBI:15378"/>
        <dbReference type="ChEBI" id="CHEBI:57856"/>
        <dbReference type="ChEBI" id="CHEBI:59789"/>
        <dbReference type="ChEBI" id="CHEBI:65315"/>
        <dbReference type="ChEBI" id="CHEBI:74447"/>
        <dbReference type="EC" id="2.1.1.190"/>
    </reaction>
</comment>
<comment type="similarity">
    <text evidence="1">Belongs to the class I-like SAM-binding methyltransferase superfamily. RNA M5U methyltransferase family. RlmD subfamily.</text>
</comment>
<comment type="sequence caution" evidence="2">
    <conflict type="erroneous initiation">
        <sequence resource="EMBL-CDS" id="AAW86576"/>
    </conflict>
</comment>
<name>RLMD_ALIF1</name>
<keyword id="KW-0004">4Fe-4S</keyword>
<keyword id="KW-0408">Iron</keyword>
<keyword id="KW-0411">Iron-sulfur</keyword>
<keyword id="KW-0479">Metal-binding</keyword>
<keyword id="KW-0489">Methyltransferase</keyword>
<keyword id="KW-1185">Reference proteome</keyword>
<keyword id="KW-0698">rRNA processing</keyword>
<keyword id="KW-0949">S-adenosyl-L-methionine</keyword>
<keyword id="KW-0808">Transferase</keyword>
<reference key="1">
    <citation type="journal article" date="2005" name="Proc. Natl. Acad. Sci. U.S.A.">
        <title>Complete genome sequence of Vibrio fischeri: a symbiotic bacterium with pathogenic congeners.</title>
        <authorList>
            <person name="Ruby E.G."/>
            <person name="Urbanowski M."/>
            <person name="Campbell J."/>
            <person name="Dunn A."/>
            <person name="Faini M."/>
            <person name="Gunsalus R."/>
            <person name="Lostroh P."/>
            <person name="Lupp C."/>
            <person name="McCann J."/>
            <person name="Millikan D."/>
            <person name="Schaefer A."/>
            <person name="Stabb E."/>
            <person name="Stevens A."/>
            <person name="Visick K."/>
            <person name="Whistler C."/>
            <person name="Greenberg E.P."/>
        </authorList>
    </citation>
    <scope>NUCLEOTIDE SEQUENCE [LARGE SCALE GENOMIC DNA]</scope>
    <source>
        <strain>ATCC 700601 / ES114</strain>
    </source>
</reference>